<name>DNMK_BPT5</name>
<proteinExistence type="evidence at protein level"/>
<feature type="chain" id="PRO_0000435563" description="Deoxynucleoside-5'-monophosphate kinase">
    <location>
        <begin position="1"/>
        <end position="250"/>
    </location>
</feature>
<feature type="binding site" evidence="1">
    <location>
        <position position="14"/>
    </location>
    <ligand>
        <name>ATP</name>
        <dbReference type="ChEBI" id="CHEBI:30616"/>
    </ligand>
</feature>
<feature type="binding site" evidence="1">
    <location>
        <position position="16"/>
    </location>
    <ligand>
        <name>ATP</name>
        <dbReference type="ChEBI" id="CHEBI:30616"/>
    </ligand>
</feature>
<feature type="binding site" evidence="1">
    <location>
        <position position="17"/>
    </location>
    <ligand>
        <name>ATP</name>
        <dbReference type="ChEBI" id="CHEBI:30616"/>
    </ligand>
</feature>
<feature type="binding site" evidence="1">
    <location>
        <position position="44"/>
    </location>
    <ligand>
        <name>dGMP</name>
        <dbReference type="ChEBI" id="CHEBI:57673"/>
    </ligand>
</feature>
<feature type="binding site" evidence="1">
    <location>
        <position position="65"/>
    </location>
    <ligand>
        <name>dGMP</name>
        <dbReference type="ChEBI" id="CHEBI:57673"/>
    </ligand>
</feature>
<feature type="binding site" evidence="1">
    <location>
        <position position="130"/>
    </location>
    <ligand>
        <name>dGMP</name>
        <dbReference type="ChEBI" id="CHEBI:57673"/>
    </ligand>
</feature>
<feature type="binding site" evidence="1">
    <location>
        <position position="137"/>
    </location>
    <ligand>
        <name>dGMP</name>
        <dbReference type="ChEBI" id="CHEBI:57673"/>
    </ligand>
</feature>
<feature type="binding site" evidence="1">
    <location>
        <position position="138"/>
    </location>
    <ligand>
        <name>dGMP</name>
        <dbReference type="ChEBI" id="CHEBI:57673"/>
    </ligand>
</feature>
<feature type="binding site" evidence="1">
    <location>
        <position position="150"/>
    </location>
    <ligand>
        <name>dGMP</name>
        <dbReference type="ChEBI" id="CHEBI:57673"/>
    </ligand>
</feature>
<feature type="binding site" evidence="1">
    <location>
        <position position="170"/>
    </location>
    <ligand>
        <name>dGMP</name>
        <dbReference type="ChEBI" id="CHEBI:57673"/>
    </ligand>
</feature>
<feature type="binding site" evidence="1">
    <location>
        <position position="172"/>
    </location>
    <ligand>
        <name>dGMP</name>
        <dbReference type="ChEBI" id="CHEBI:57673"/>
    </ligand>
</feature>
<feature type="binding site" evidence="1">
    <location>
        <position position="176"/>
    </location>
    <ligand>
        <name>dGMP</name>
        <dbReference type="ChEBI" id="CHEBI:57673"/>
    </ligand>
</feature>
<feature type="binding site" evidence="1">
    <location>
        <position position="210"/>
    </location>
    <ligand>
        <name>dGMP</name>
        <dbReference type="ChEBI" id="CHEBI:57673"/>
    </ligand>
</feature>
<feature type="mutagenesis site" description="About 5-50% loss of enzyme activity depending on the substrate." evidence="4">
    <original>S</original>
    <variation>A</variation>
    <location>
        <position position="13"/>
    </location>
</feature>
<feature type="mutagenesis site" description="About 5-50% loss of enzyme activity depending on the substrate." evidence="4">
    <original>D</original>
    <variation>N</variation>
    <location>
        <position position="16"/>
    </location>
</feature>
<feature type="mutagenesis site" description="About 75-95% loss of enzyme activity depending on the substrate." evidence="4">
    <original>T</original>
    <variation>N</variation>
    <location>
        <position position="17"/>
    </location>
</feature>
<feature type="mutagenesis site" description="About 5-50% loss of enzyme activity depending on the substrate." evidence="4">
    <original>T</original>
    <variation>S</variation>
    <location>
        <position position="17"/>
    </location>
</feature>
<feature type="mutagenesis site" description="Complete loss of enzyme activity." evidence="4">
    <original>R</original>
    <variation>K</variation>
    <location>
        <position position="130"/>
    </location>
</feature>
<feature type="mutagenesis site" description="Almost no loss of enzyme activity." evidence="4">
    <original>K</original>
    <variation>E</variation>
    <location>
        <position position="131"/>
    </location>
</feature>
<feature type="mutagenesis site" description="About 75-95% loss of enzyme activity depending on the substrate." evidence="4">
    <original>Q</original>
    <variation>A</variation>
    <location>
        <position position="134"/>
    </location>
</feature>
<feature type="mutagenesis site" description="Almost complete loss of enzyme activity." evidence="4">
    <original>G</original>
    <variation>A</variation>
    <location>
        <position position="137"/>
    </location>
</feature>
<feature type="mutagenesis site" description="About 75-95% loss of enzyme activity depending on the substrate." evidence="4">
    <original>T</original>
    <variation>A</variation>
    <location>
        <position position="138"/>
    </location>
</feature>
<feature type="mutagenesis site" description="No loss of enzyme activity." evidence="4">
    <original>W</original>
    <variation>A</variation>
    <variation>F</variation>
    <location>
        <position position="150"/>
    </location>
</feature>
<feature type="mutagenesis site" description="Complete loss of enzyme activity." evidence="4">
    <original>D</original>
    <variation>N</variation>
    <location>
        <position position="170"/>
    </location>
</feature>
<feature type="mutagenesis site" description="Complete loss of enzyme activity." evidence="4">
    <original>R</original>
    <variation>I</variation>
    <location>
        <position position="172"/>
    </location>
</feature>
<feature type="mutagenesis site" description="Almost complete loss of enzyme activity." evidence="4">
    <original>E</original>
    <variation>Q</variation>
    <location>
        <position position="176"/>
    </location>
</feature>
<feature type="sequence conflict" description="In Ref. 4; AAU05195." evidence="5" ref="4">
    <original>V</original>
    <variation>M</variation>
    <location>
        <position position="237"/>
    </location>
</feature>
<sequence length="250" mass="28701">MSVLVGLHGEAGSGKDTVAKLIIDWCNDTYPTCLSRRYSFAKPVYELASVILGVTPEFLGERRGKEIDQWFTVTQSQLERARDVWFKYGIDKFEDFSYVWPIFEEKYLNPQQLISENKEDGLYSLFISPRKMLQLVGTELGRQLVHERIWLIILEQSIAKDDPDVAVITDVRFPNEGELLRETNHLDMDSLLVNVVPAEQKFTIKSDHPSESGIPAKYITHELVNKFDGINNLKLEVYNFCDLELEPLVG</sequence>
<reference key="1">
    <citation type="journal article" date="2004" name="Protein Expr. Purif.">
        <title>Identification, cloning, and expression of bacteriophage T5 dnk gene encoding a broad specificity deoxyribonucleoside monophosphate kinase (EC 2.7.4.13).</title>
        <authorList>
            <person name="Mikoulinskaia G.V."/>
            <person name="Zimin A.A."/>
            <person name="Feofanov S.A."/>
            <person name="Miroshnikov A.I."/>
        </authorList>
    </citation>
    <scope>NUCLEOTIDE SEQUENCE [GENOMIC DNA]</scope>
    <scope>FUNCTION</scope>
    <scope>CATALYTIC ACTIVITY</scope>
    <scope>SUBUNIT</scope>
</reference>
<reference key="2">
    <citation type="submission" date="2004-01" db="EMBL/GenBank/DDBJ databases">
        <title>Bacteriophage T5 complete genome.</title>
        <authorList>
            <person name="Ksenzenko V.N."/>
            <person name="Kaliman A.V."/>
            <person name="Krutilina A.I."/>
            <person name="Shlyapnikov M.G."/>
        </authorList>
    </citation>
    <scope>NUCLEOTIDE SEQUENCE [LARGE SCALE GENOMIC DNA]</scope>
</reference>
<reference key="3">
    <citation type="journal article" date="2005" name="Virology">
        <title>Complete genome sequence of bacteriophage T5.</title>
        <authorList>
            <person name="Wang J."/>
            <person name="Jiang Y."/>
            <person name="Vincent M."/>
            <person name="Sun Y."/>
            <person name="Yu H."/>
            <person name="Wang J."/>
            <person name="Bao Q."/>
            <person name="Kong H."/>
            <person name="Hu S."/>
        </authorList>
    </citation>
    <scope>NUCLEOTIDE SEQUENCE [LARGE SCALE GENOMIC DNA]</scope>
    <scope>INDUCTION</scope>
    <source>
        <strain evidence="9">ATCC 11303-B5</strain>
    </source>
</reference>
<reference key="4">
    <citation type="journal article" date="2014" name="J. Virol.">
        <title>Insights into bacteriophage T5 structure from analysis of its morphogenesis genes and protein components.</title>
        <authorList>
            <person name="Zivanovic Y."/>
            <person name="Confalonieri F."/>
            <person name="Ponchon L."/>
            <person name="Lurz R."/>
            <person name="Chami M."/>
            <person name="Flayhan A."/>
            <person name="Renouard M."/>
            <person name="Huet A."/>
            <person name="Decottignies P."/>
            <person name="Davidson A.R."/>
            <person name="Breyton C."/>
            <person name="Boulanger P."/>
        </authorList>
    </citation>
    <scope>NUCLEOTIDE SEQUENCE [LARGE SCALE GENOMIC DNA]</scope>
    <source>
        <strain>St0 deletion mutant</strain>
    </source>
</reference>
<reference key="5">
    <citation type="journal article" date="2003" name="Protein Expr. Purif.">
        <title>Purification and characterization of the deoxynucleoside monophosphate kinase of bacteriophage T5.</title>
        <authorList>
            <person name="Mikoulinskaia G.V."/>
            <person name="Gubanov S.I."/>
            <person name="Zimin A.A."/>
            <person name="Kolesnikov I.V."/>
            <person name="Feofanov S.A."/>
            <person name="Miroshnikov A.I."/>
        </authorList>
    </citation>
    <scope>PROTEIN SEQUENCE OF 3-23</scope>
    <scope>SUBUNIT</scope>
    <scope>BIOPHYSICOCHEMICAL PROPERTIES</scope>
    <scope>FUNCTION</scope>
    <scope>CATALYTIC ACTIVITY</scope>
</reference>
<reference key="6">
    <citation type="journal article" date="2013" name="Bioorg. Khim.">
        <title>The Study of the Bacteriophage T5 Deoxynucleoside Monophosphate Kinase Active Site by Site-Directed Mutagenesis.</title>
        <authorList>
            <person name="Mikulinskaia G.V."/>
            <person name="Taran S.A."/>
            <person name="Skoblov I.U.S."/>
            <person name="Feofanov S.A."/>
        </authorList>
    </citation>
    <scope>MUTAGENESIS OF SER-13; ASP-16; THR-17; ARG-130; LYS-131; GLN-134; GLY-137; THR-138; TRP-150; ASP-170; ARG-172 AND GLU-176</scope>
    <scope>CATALYTIC ACTIVITY</scope>
</reference>
<accession>Q6QGP4</accession>
<accession>Q66M07</accession>
<organismHost>
    <name type="scientific">Escherichia coli</name>
    <dbReference type="NCBI Taxonomy" id="562"/>
</organismHost>
<comment type="function">
    <text evidence="2 3">Allows the synthesis of deoxyribonucleoside triphosphates necessary for the rapid viral DNA replication (PubMed:12597877, PubMed:14711503). Phosphorylates all four dNMPs (PubMed:12597877, PubMed:14711503). The enzyme had the highest activity with dAMP and had about 30% less activity with dTMP and dGMP, respectively (PubMed:12597877). The lowest activity was observed with dCMP as the substrate (about 35% of that with dAMP) (PubMed:12597877).</text>
</comment>
<comment type="catalytic activity">
    <reaction evidence="2 3 4">
        <text>a 2'-deoxyribonucleoside 5'-phosphate + ATP = a 2'-deoxyribonucleoside 5'-diphosphate + ADP</text>
        <dbReference type="Rhea" id="RHEA:11216"/>
        <dbReference type="ChEBI" id="CHEBI:30616"/>
        <dbReference type="ChEBI" id="CHEBI:65317"/>
        <dbReference type="ChEBI" id="CHEBI:73316"/>
        <dbReference type="ChEBI" id="CHEBI:456216"/>
        <dbReference type="EC" id="2.7.4.13"/>
    </reaction>
    <physiologicalReaction direction="left-to-right" evidence="2 3 4">
        <dbReference type="Rhea" id="RHEA:11217"/>
    </physiologicalReaction>
</comment>
<comment type="biophysicochemical properties">
    <phDependence>
        <text evidence="2">Optimum pH is 7.0-7.5.</text>
    </phDependence>
</comment>
<comment type="subunit">
    <text evidence="2 3">Monomer.</text>
</comment>
<comment type="induction">
    <text evidence="6">Expressed in the early phase of the viral replicative cycle.</text>
</comment>
<comment type="similarity">
    <text evidence="5">Belongs to the dNMP kinase family.</text>
</comment>
<evidence type="ECO:0000250" key="1">
    <source>
        <dbReference type="UniProtKB" id="P04531"/>
    </source>
</evidence>
<evidence type="ECO:0000269" key="2">
    <source>
    </source>
</evidence>
<evidence type="ECO:0000269" key="3">
    <source>
    </source>
</evidence>
<evidence type="ECO:0000269" key="4">
    <source>
    </source>
</evidence>
<evidence type="ECO:0000305" key="5"/>
<evidence type="ECO:0000305" key="6">
    <source>
    </source>
</evidence>
<evidence type="ECO:0000312" key="7">
    <source>
        <dbReference type="EMBL" id="AAS77090.1"/>
    </source>
</evidence>
<evidence type="ECO:0000312" key="8">
    <source>
        <dbReference type="EMBL" id="AAU05195.1"/>
    </source>
</evidence>
<evidence type="ECO:0000312" key="9">
    <source>
        <dbReference type="EMBL" id="AAX11976.1"/>
    </source>
</evidence>
<protein>
    <recommendedName>
        <fullName evidence="7">Deoxynucleoside-5'-monophosphate kinase</fullName>
        <ecNumber evidence="2 3 4">2.7.4.13</ecNumber>
    </recommendedName>
</protein>
<organism>
    <name type="scientific">Escherichia phage T5</name>
    <name type="common">Enterobacteria phage T5</name>
    <dbReference type="NCBI Taxonomy" id="2695836"/>
    <lineage>
        <taxon>Viruses</taxon>
        <taxon>Duplodnaviria</taxon>
        <taxon>Heunggongvirae</taxon>
        <taxon>Uroviricota</taxon>
        <taxon>Caudoviricetes</taxon>
        <taxon>Demerecviridae</taxon>
        <taxon>Markadamsvirinae</taxon>
        <taxon>Tequintavirus</taxon>
        <taxon>Tequintavirus T5</taxon>
    </lineage>
</organism>
<dbReference type="EC" id="2.7.4.13" evidence="2 3 4"/>
<dbReference type="EMBL" id="AY509815">
    <property type="protein sequence ID" value="AAS19390.1"/>
    <property type="molecule type" value="Genomic_DNA"/>
</dbReference>
<dbReference type="EMBL" id="AY543070">
    <property type="protein sequence ID" value="AAS77090.1"/>
    <property type="molecule type" value="Genomic_DNA"/>
</dbReference>
<dbReference type="EMBL" id="AY587007">
    <property type="protein sequence ID" value="AAX11976.1"/>
    <property type="molecule type" value="Genomic_DNA"/>
</dbReference>
<dbReference type="EMBL" id="AY692264">
    <property type="protein sequence ID" value="AAU05195.1"/>
    <property type="molecule type" value="Genomic_DNA"/>
</dbReference>
<dbReference type="RefSeq" id="YP_006871.1">
    <property type="nucleotide sequence ID" value="NC_005859.1"/>
</dbReference>
<dbReference type="SMR" id="Q6QGP4"/>
<dbReference type="GeneID" id="2777591"/>
<dbReference type="KEGG" id="vg:2777591"/>
<dbReference type="Proteomes" id="UP000002107">
    <property type="component" value="Genome"/>
</dbReference>
<dbReference type="Proteomes" id="UP000002141">
    <property type="component" value="Segment"/>
</dbReference>
<dbReference type="Proteomes" id="UP000002503">
    <property type="component" value="Segment"/>
</dbReference>
<dbReference type="GO" id="GO:0047507">
    <property type="term" value="F:deoxynucleoside-phosphate kinase activity, ATP as phosphate donor"/>
    <property type="evidence" value="ECO:0000314"/>
    <property type="project" value="UniProtKB"/>
</dbReference>
<dbReference type="GO" id="GO:0006260">
    <property type="term" value="P:DNA replication"/>
    <property type="evidence" value="ECO:0007669"/>
    <property type="project" value="UniProtKB-KW"/>
</dbReference>
<dbReference type="GO" id="GO:0039693">
    <property type="term" value="P:viral DNA genome replication"/>
    <property type="evidence" value="ECO:0007669"/>
    <property type="project" value="UniProtKB-KW"/>
</dbReference>
<dbReference type="FunFam" id="3.40.50.300:FF:002499">
    <property type="entry name" value="Deoxynucleotide monophosphate kinase"/>
    <property type="match status" value="1"/>
</dbReference>
<dbReference type="Gene3D" id="3.40.50.300">
    <property type="entry name" value="P-loop containing nucleotide triphosphate hydrolases"/>
    <property type="match status" value="2"/>
</dbReference>
<dbReference type="InterPro" id="IPR048444">
    <property type="entry name" value="DNMK"/>
</dbReference>
<dbReference type="InterPro" id="IPR027417">
    <property type="entry name" value="P-loop_NTPase"/>
</dbReference>
<dbReference type="Pfam" id="PF21448">
    <property type="entry name" value="DNMK"/>
    <property type="match status" value="1"/>
</dbReference>
<dbReference type="SUPFAM" id="SSF52540">
    <property type="entry name" value="P-loop containing nucleoside triphosphate hydrolases"/>
    <property type="match status" value="1"/>
</dbReference>
<keyword id="KW-0067">ATP-binding</keyword>
<keyword id="KW-0903">Direct protein sequencing</keyword>
<keyword id="KW-0235">DNA replication</keyword>
<keyword id="KW-0244">Early protein</keyword>
<keyword id="KW-0418">Kinase</keyword>
<keyword id="KW-0547">Nucleotide-binding</keyword>
<keyword id="KW-1185">Reference proteome</keyword>
<keyword id="KW-0808">Transferase</keyword>
<keyword id="KW-1194">Viral DNA replication</keyword>
<gene>
    <name evidence="7" type="primary">dnk</name>
    <name evidence="7" type="ORF">T5.043</name>
    <name evidence="8" type="ORF">T5p042</name>
</gene>